<sequence>MPKDKAVGIQVSQVSKQFGSFQAVKDVDLTVETGSLVALLGPSGSGKSTLLRLIAGLEQPDSGRIFLTGRDATNESVRDRQIGFVFQHYALFKHLTVRKNIAFGLELRKHTKEKVRARVEELLELVQLTGLGDRYPSQLSGGQRQRVALARALAVQPQVLLLDEPFGALDAKVRKDLRSWLRKLHDEVHVTTVFVTHDQEEAMEVADQIVVMNHGKVEQIGSPAEIYDNPATPFVMSFIGPVNVLPNSSHIFQAGGLDTPHPEVFLRPHDIEIAIDPIPETVPARIDRIVHLGWEVQAEVRLEDGQVLVAHLPRDRYRDLQLEPEQQVFVRPKQARSFPLNYSI</sequence>
<proteinExistence type="evidence at transcript level"/>
<reference key="1">
    <citation type="journal article" date="1989" name="Proc. Natl. Acad. Sci. U.S.A.">
        <title>A region of a cyanobacterial genome required for sulfate transport.</title>
        <authorList>
            <person name="Green L.S."/>
            <person name="Laudenbach D.E."/>
            <person name="Grossman A.R."/>
        </authorList>
    </citation>
    <scope>NUCLEOTIDE SEQUENCE [GENOMIC DNA]</scope>
</reference>
<reference key="2">
    <citation type="submission" date="2005-08" db="EMBL/GenBank/DDBJ databases">
        <title>Complete sequence of chromosome 1 of Synechococcus elongatus PCC 7942.</title>
        <authorList>
            <consortium name="US DOE Joint Genome Institute"/>
            <person name="Copeland A."/>
            <person name="Lucas S."/>
            <person name="Lapidus A."/>
            <person name="Barry K."/>
            <person name="Detter J.C."/>
            <person name="Glavina T."/>
            <person name="Hammon N."/>
            <person name="Israni S."/>
            <person name="Pitluck S."/>
            <person name="Schmutz J."/>
            <person name="Larimer F."/>
            <person name="Land M."/>
            <person name="Kyrpides N."/>
            <person name="Lykidis A."/>
            <person name="Golden S."/>
            <person name="Richardson P."/>
        </authorList>
    </citation>
    <scope>NUCLEOTIDE SEQUENCE [LARGE SCALE GENOMIC DNA]</scope>
    <source>
        <strain>ATCC 33912 / PCC 7942 / FACHB-805</strain>
    </source>
</reference>
<reference key="3">
    <citation type="journal article" date="1991" name="J. Bacteriol.">
        <title>Characterization and mutagenesis of sulfur-regulated genes in a cyanobacterium: evidence for function in sulfate transport.</title>
        <authorList>
            <person name="Laudenbach D.E."/>
            <person name="Grossman A.R."/>
        </authorList>
    </citation>
    <scope>NUCLEOTIDE SEQUENCE [GENOMIC DNA] OF 1-11</scope>
</reference>
<dbReference type="EC" id="7.3.2.3" evidence="1"/>
<dbReference type="EMBL" id="J04512">
    <property type="protein sequence ID" value="AAA22056.1"/>
    <property type="molecule type" value="Genomic_DNA"/>
</dbReference>
<dbReference type="EMBL" id="CP000100">
    <property type="protein sequence ID" value="ABB57710.1"/>
    <property type="status" value="ALT_INIT"/>
    <property type="molecule type" value="Genomic_DNA"/>
</dbReference>
<dbReference type="EMBL" id="M65247">
    <property type="protein sequence ID" value="AAA73042.2"/>
    <property type="molecule type" value="Genomic_DNA"/>
</dbReference>
<dbReference type="PIR" id="A30301">
    <property type="entry name" value="GRYCS7"/>
</dbReference>
<dbReference type="SMR" id="P14788"/>
<dbReference type="STRING" id="1140.Synpcc7942_1680"/>
<dbReference type="PaxDb" id="1140-Synpcc7942_1680"/>
<dbReference type="KEGG" id="syf:Synpcc7942_1680"/>
<dbReference type="eggNOG" id="COG1118">
    <property type="taxonomic scope" value="Bacteria"/>
</dbReference>
<dbReference type="HOGENOM" id="CLU_000604_1_1_3"/>
<dbReference type="BioCyc" id="SYNEL:SYNPCC7942_1680-MONOMER"/>
<dbReference type="Proteomes" id="UP000889800">
    <property type="component" value="Chromosome"/>
</dbReference>
<dbReference type="GO" id="GO:0043190">
    <property type="term" value="C:ATP-binding cassette (ABC) transporter complex"/>
    <property type="evidence" value="ECO:0007669"/>
    <property type="project" value="InterPro"/>
</dbReference>
<dbReference type="GO" id="GO:0015419">
    <property type="term" value="F:ABC-type sulfate transporter activity"/>
    <property type="evidence" value="ECO:0007669"/>
    <property type="project" value="InterPro"/>
</dbReference>
<dbReference type="GO" id="GO:0102025">
    <property type="term" value="F:ABC-type thiosulfate transporter activity"/>
    <property type="evidence" value="ECO:0007669"/>
    <property type="project" value="RHEA"/>
</dbReference>
<dbReference type="GO" id="GO:0005524">
    <property type="term" value="F:ATP binding"/>
    <property type="evidence" value="ECO:0007669"/>
    <property type="project" value="UniProtKB-KW"/>
</dbReference>
<dbReference type="GO" id="GO:0016887">
    <property type="term" value="F:ATP hydrolysis activity"/>
    <property type="evidence" value="ECO:0007669"/>
    <property type="project" value="InterPro"/>
</dbReference>
<dbReference type="CDD" id="cd03296">
    <property type="entry name" value="ABC_CysA_sulfate_importer"/>
    <property type="match status" value="1"/>
</dbReference>
<dbReference type="FunFam" id="3.40.50.300:FF:000425">
    <property type="entry name" value="Probable ABC transporter, ATP-binding subunit"/>
    <property type="match status" value="1"/>
</dbReference>
<dbReference type="Gene3D" id="3.40.50.300">
    <property type="entry name" value="P-loop containing nucleotide triphosphate hydrolases"/>
    <property type="match status" value="1"/>
</dbReference>
<dbReference type="InterPro" id="IPR003593">
    <property type="entry name" value="AAA+_ATPase"/>
</dbReference>
<dbReference type="InterPro" id="IPR050093">
    <property type="entry name" value="ABC_SmlMolc_Importer"/>
</dbReference>
<dbReference type="InterPro" id="IPR003439">
    <property type="entry name" value="ABC_transporter-like_ATP-bd"/>
</dbReference>
<dbReference type="InterPro" id="IPR017871">
    <property type="entry name" value="ABC_transporter-like_CS"/>
</dbReference>
<dbReference type="InterPro" id="IPR008995">
    <property type="entry name" value="Mo/tungstate-bd_C_term_dom"/>
</dbReference>
<dbReference type="InterPro" id="IPR027417">
    <property type="entry name" value="P-loop_NTPase"/>
</dbReference>
<dbReference type="InterPro" id="IPR005666">
    <property type="entry name" value="Sulph_transpt1"/>
</dbReference>
<dbReference type="InterPro" id="IPR005116">
    <property type="entry name" value="Transp-assoc_OB_typ1"/>
</dbReference>
<dbReference type="NCBIfam" id="TIGR00968">
    <property type="entry name" value="3a0106s01"/>
    <property type="match status" value="1"/>
</dbReference>
<dbReference type="PANTHER" id="PTHR42781">
    <property type="entry name" value="SPERMIDINE/PUTRESCINE IMPORT ATP-BINDING PROTEIN POTA"/>
    <property type="match status" value="1"/>
</dbReference>
<dbReference type="PANTHER" id="PTHR42781:SF4">
    <property type="entry name" value="SPERMIDINE_PUTRESCINE IMPORT ATP-BINDING PROTEIN POTA"/>
    <property type="match status" value="1"/>
</dbReference>
<dbReference type="Pfam" id="PF00005">
    <property type="entry name" value="ABC_tran"/>
    <property type="match status" value="1"/>
</dbReference>
<dbReference type="Pfam" id="PF03459">
    <property type="entry name" value="TOBE"/>
    <property type="match status" value="1"/>
</dbReference>
<dbReference type="SMART" id="SM00382">
    <property type="entry name" value="AAA"/>
    <property type="match status" value="1"/>
</dbReference>
<dbReference type="SUPFAM" id="SSF50331">
    <property type="entry name" value="MOP-like"/>
    <property type="match status" value="1"/>
</dbReference>
<dbReference type="SUPFAM" id="SSF52540">
    <property type="entry name" value="P-loop containing nucleoside triphosphate hydrolases"/>
    <property type="match status" value="1"/>
</dbReference>
<dbReference type="PROSITE" id="PS00211">
    <property type="entry name" value="ABC_TRANSPORTER_1"/>
    <property type="match status" value="1"/>
</dbReference>
<dbReference type="PROSITE" id="PS50893">
    <property type="entry name" value="ABC_TRANSPORTER_2"/>
    <property type="match status" value="1"/>
</dbReference>
<dbReference type="PROSITE" id="PS51237">
    <property type="entry name" value="CYSA"/>
    <property type="match status" value="1"/>
</dbReference>
<feature type="chain" id="PRO_0000092296" description="Sulfate/thiosulfate import ATP-binding protein CysA">
    <location>
        <begin position="1"/>
        <end position="344"/>
    </location>
</feature>
<feature type="domain" description="ABC transporter" evidence="1">
    <location>
        <begin position="9"/>
        <end position="239"/>
    </location>
</feature>
<feature type="binding site" evidence="1">
    <location>
        <begin position="41"/>
        <end position="48"/>
    </location>
    <ligand>
        <name>ATP</name>
        <dbReference type="ChEBI" id="CHEBI:30616"/>
    </ligand>
</feature>
<accession>P14788</accession>
<accession>Q31MK9</accession>
<gene>
    <name evidence="1" type="primary">cysA</name>
    <name type="ordered locus">Synpcc7942_1680</name>
</gene>
<keyword id="KW-0067">ATP-binding</keyword>
<keyword id="KW-0997">Cell inner membrane</keyword>
<keyword id="KW-1003">Cell membrane</keyword>
<keyword id="KW-0472">Membrane</keyword>
<keyword id="KW-0547">Nucleotide-binding</keyword>
<keyword id="KW-1185">Reference proteome</keyword>
<keyword id="KW-0346">Stress response</keyword>
<keyword id="KW-0764">Sulfate transport</keyword>
<keyword id="KW-1278">Translocase</keyword>
<keyword id="KW-0813">Transport</keyword>
<name>CYSA_SYNE7</name>
<evidence type="ECO:0000255" key="1">
    <source>
        <dbReference type="HAMAP-Rule" id="MF_01701"/>
    </source>
</evidence>
<evidence type="ECO:0000305" key="2"/>
<protein>
    <recommendedName>
        <fullName evidence="1">Sulfate/thiosulfate import ATP-binding protein CysA</fullName>
        <ecNumber evidence="1">7.3.2.3</ecNumber>
    </recommendedName>
    <alternativeName>
        <fullName evidence="1">Sulfate-transporting ATPase</fullName>
    </alternativeName>
</protein>
<organism>
    <name type="scientific">Synechococcus elongatus (strain ATCC 33912 / PCC 7942 / FACHB-805)</name>
    <name type="common">Anacystis nidulans R2</name>
    <dbReference type="NCBI Taxonomy" id="1140"/>
    <lineage>
        <taxon>Bacteria</taxon>
        <taxon>Bacillati</taxon>
        <taxon>Cyanobacteriota</taxon>
        <taxon>Cyanophyceae</taxon>
        <taxon>Synechococcales</taxon>
        <taxon>Synechococcaceae</taxon>
        <taxon>Synechococcus</taxon>
    </lineage>
</organism>
<comment type="function">
    <text>Part of the ABC transporter complex CysAWTP involved in sulfate/thiosulfate import. Responsible for energy coupling to the transport system.</text>
</comment>
<comment type="catalytic activity">
    <reaction evidence="1">
        <text>sulfate(out) + ATP + H2O = sulfate(in) + ADP + phosphate + H(+)</text>
        <dbReference type="Rhea" id="RHEA:10192"/>
        <dbReference type="ChEBI" id="CHEBI:15377"/>
        <dbReference type="ChEBI" id="CHEBI:15378"/>
        <dbReference type="ChEBI" id="CHEBI:16189"/>
        <dbReference type="ChEBI" id="CHEBI:30616"/>
        <dbReference type="ChEBI" id="CHEBI:43474"/>
        <dbReference type="ChEBI" id="CHEBI:456216"/>
        <dbReference type="EC" id="7.3.2.3"/>
    </reaction>
</comment>
<comment type="catalytic activity">
    <reaction evidence="1">
        <text>thiosulfate(out) + ATP + H2O = thiosulfate(in) + ADP + phosphate + H(+)</text>
        <dbReference type="Rhea" id="RHEA:29871"/>
        <dbReference type="ChEBI" id="CHEBI:15377"/>
        <dbReference type="ChEBI" id="CHEBI:15378"/>
        <dbReference type="ChEBI" id="CHEBI:30616"/>
        <dbReference type="ChEBI" id="CHEBI:33542"/>
        <dbReference type="ChEBI" id="CHEBI:43474"/>
        <dbReference type="ChEBI" id="CHEBI:456216"/>
        <dbReference type="EC" id="7.3.2.3"/>
    </reaction>
</comment>
<comment type="subunit">
    <text evidence="1">The complex is composed of two ATP-binding proteins (CysA), two transmembrane proteins (CysT and CysW) and a solute-binding protein (CysP).</text>
</comment>
<comment type="subcellular location">
    <subcellularLocation>
        <location>Cell inner membrane</location>
        <topology>Peripheral membrane protein</topology>
    </subcellularLocation>
</comment>
<comment type="induction">
    <text>By sulfur deprivation.</text>
</comment>
<comment type="similarity">
    <text evidence="1">Belongs to the ABC transporter superfamily. Sulfate/tungstate importer (TC 3.A.1.6) family.</text>
</comment>
<comment type="sequence caution" evidence="2">
    <conflict type="erroneous initiation">
        <sequence resource="EMBL-CDS" id="ABB57710"/>
    </conflict>
</comment>